<sequence length="904" mass="103658">MSRPLPYHIHFFSGLLTCWILCTSSAHKCTVRHEVADCSHLKLTQIPDDLPTNITVLNLTHNQLRRLPPANFTRYSQLTTLDGGFNSISKLEPELCQSLPWLEILNLQHNEISQLSDKTFIFCMNLTELHLMSNSIQKIKNDPFKNLKNLIKLDLSHNGLSSTKLGTQLQLENLQELLLSNNKISSLTPGEFDFLGNSSLKRLELSSNQIKEFSPGCFHTLGELSGLSLNNAKLSPSLTEKLCLELSNTSIENLSLSSNQLDTISHTTFDGLKQTNLTTLDLSRNSLRVMGNDSFAWLPHLEYLSLEYNNIEHLSSRSFYGLSNLRRLDLRRSFTRQSISLTSLPKIDDFSFQWLKCLEYLNMDDNNFPGIKRNTFTGLVRLKFLSLSNSFSSLRTLTNETFLSLAGCPLLLLDLTKNKISKIQSGAFSWLGHLEVLDLGLNEIGQELTGQEWRGLDNIVEIYLSYNKYLELTTNSFTSVPSLQRLMLRRVALKNVDCSPSPFRPLPNLVILDLSNNNIANINDELLKGLEKLEILDLQHNNLARLWKHANPGGPVQFLKGLFHLHILNLGSNGFDEIPVEAFKDLRELKSIDLGMNNLNILPQSVFDNQVSLKSLSLQKNLITSVQKTVFGPAFRNLSYLDMRFNPFDCTCESIAWFVNWINITHTNISELSNHYLCNTPPQYHGYPVMLFDVSPCKDSAPFELLFMININILLIFIFIVLLIHFEGWRISFYWNVSVHRVLGFKEIDRAEQFEYAAYIIHAYKDRDWVWKHSSPMEDEDHTLRFCLEERDFEAGVLELEAIVNSIRRSRKIIFVVTQNLLKDPLCKRFKVHHAVQQAIEQNLDSIILIFLEEIPDYKLNHALCLRRGMFKSHCILNWPVQKERVNAFHHKLKVALGSRNSAH</sequence>
<accession>Q5TJ59</accession>
<comment type="function">
    <text evidence="1">Key component of innate and adaptive immunity. TLRs (Toll-like receptors) control host immune response against pathogens through recognition of molecular patterns specific to microorganisms. TLR3 is a nucleotide-sensing TLR which is activated by double-stranded RNA, a sign of viral infection. Acts via the adapter TRIF/TICAM1, leading to NF-kappa-B activation, IRF3 nuclear translocation, cytokine secretion and the inflammatory response (By similarity).</text>
</comment>
<comment type="subunit">
    <text evidence="2">Monomer and homodimer; dimerization is triggered by ligand-binding, the signaling unit is composed of one ds-RNA of around 40 bp and two TLR3 molecules, and lateral clustering of signaling units along the length of the ds-RNA ligand is required for TLR3 signal transduction. Interacts (via transmembrane domain) with UNC93B1; the interaction is required for transport from the ER to the endosomes. Interacts with TICAM1 (via the TIR domain) in response to poly(I:C) and this interaction is enhanced in the presence of WDFY1. Interacts with SRC; upon binding of double-stranded RNA. The tyrosine-phosphorylated form (via TIR domain) interacts with WDFY1 (via WD repeat 2) in response to poly(I:C).</text>
</comment>
<comment type="subcellular location">
    <subcellularLocation>
        <location>Endoplasmic reticulum membrane</location>
        <topology>Single-pass type I membrane protein</topology>
    </subcellularLocation>
    <subcellularLocation>
        <location evidence="2">Endosome membrane</location>
    </subcellularLocation>
    <subcellularLocation>
        <location evidence="2">Early endosome</location>
    </subcellularLocation>
</comment>
<comment type="domain">
    <text evidence="1">ds-RNA binding is mediated by LRR 1 to 3, and LRR 17 to 18.</text>
</comment>
<comment type="PTM">
    <text evidence="1">TLR3 signaling requires a proteolytic cleavage mediated by cathepsins CTSB and CTSH, the cleavage occurs between amino acids 252 and 346. The cleaved form of TLR3 is the predominant form found in endosomes (By similarity).</text>
</comment>
<comment type="PTM">
    <text evidence="2">Ubiquitinated by TRIM3; leading to recognition and sorting of polyubiquitinated TLR3 by the ESCRT complexes. Ubiquitinated by ZNRF1 via 'Lys-63'-linked ubiquitin chains; leading to TLR3 lysosomal trafficking and degradation. Ubiquitinated by RNF170 at Lys-765 via 'Lys-48'-linked ubiquitin chains; leading to TLR3 proteasomal degradation.</text>
</comment>
<comment type="similarity">
    <text evidence="6">Belongs to the Toll-like receptor family.</text>
</comment>
<proteinExistence type="evidence at transcript level"/>
<gene>
    <name type="primary">TLR3</name>
</gene>
<feature type="signal peptide" evidence="4">
    <location>
        <begin position="1"/>
        <end position="26"/>
    </location>
</feature>
<feature type="chain" id="PRO_0000253496" description="Toll-like receptor 3">
    <location>
        <begin position="27"/>
        <end position="904"/>
    </location>
</feature>
<feature type="topological domain" description="Lumenal" evidence="4">
    <location>
        <begin position="27"/>
        <end position="705"/>
    </location>
</feature>
<feature type="transmembrane region" description="Helical" evidence="4">
    <location>
        <begin position="706"/>
        <end position="726"/>
    </location>
</feature>
<feature type="topological domain" description="Cytoplasmic" evidence="4">
    <location>
        <begin position="727"/>
        <end position="904"/>
    </location>
</feature>
<feature type="domain" description="LRRNT">
    <location>
        <begin position="27"/>
        <end position="52"/>
    </location>
</feature>
<feature type="repeat" description="LRR 1">
    <location>
        <begin position="53"/>
        <end position="74"/>
    </location>
</feature>
<feature type="repeat" description="LRR 2">
    <location>
        <begin position="77"/>
        <end position="98"/>
    </location>
</feature>
<feature type="repeat" description="LRR 3">
    <location>
        <begin position="101"/>
        <end position="122"/>
    </location>
</feature>
<feature type="repeat" description="LRR 4">
    <location>
        <begin position="125"/>
        <end position="146"/>
    </location>
</feature>
<feature type="repeat" description="LRR 5">
    <location>
        <begin position="149"/>
        <end position="170"/>
    </location>
</feature>
<feature type="repeat" description="LRR 6">
    <location>
        <begin position="173"/>
        <end position="194"/>
    </location>
</feature>
<feature type="repeat" description="LRR 7">
    <location>
        <begin position="199"/>
        <end position="220"/>
    </location>
</feature>
<feature type="repeat" description="LRR 8">
    <location>
        <begin position="223"/>
        <end position="245"/>
    </location>
</feature>
<feature type="repeat" description="LRR 9">
    <location>
        <begin position="250"/>
        <end position="271"/>
    </location>
</feature>
<feature type="repeat" description="LRR 10">
    <location>
        <begin position="276"/>
        <end position="297"/>
    </location>
</feature>
<feature type="repeat" description="LRR 11">
    <location>
        <begin position="300"/>
        <end position="321"/>
    </location>
</feature>
<feature type="repeat" description="LRR 12">
    <location>
        <begin position="324"/>
        <end position="345"/>
    </location>
</feature>
<feature type="repeat" description="LRR 13">
    <location>
        <begin position="357"/>
        <end position="378"/>
    </location>
</feature>
<feature type="repeat" description="LRR 14">
    <location>
        <begin position="381"/>
        <end position="401"/>
    </location>
</feature>
<feature type="repeat" description="LRR 15">
    <location>
        <begin position="409"/>
        <end position="430"/>
    </location>
</feature>
<feature type="repeat" description="LRR 16">
    <location>
        <begin position="433"/>
        <end position="455"/>
    </location>
</feature>
<feature type="repeat" description="LRR 17">
    <location>
        <begin position="466"/>
        <end position="487"/>
    </location>
</feature>
<feature type="repeat" description="LRR 18">
    <location>
        <begin position="508"/>
        <end position="529"/>
    </location>
</feature>
<feature type="repeat" description="LRR 19">
    <location>
        <begin position="532"/>
        <end position="553"/>
    </location>
</feature>
<feature type="repeat" description="LRR 20">
    <location>
        <begin position="564"/>
        <end position="585"/>
    </location>
</feature>
<feature type="repeat" description="LRR 21">
    <location>
        <begin position="588"/>
        <end position="609"/>
    </location>
</feature>
<feature type="repeat" description="LRR 22">
    <location>
        <begin position="612"/>
        <end position="633"/>
    </location>
</feature>
<feature type="domain" description="LRRCT">
    <location>
        <begin position="646"/>
        <end position="699"/>
    </location>
</feature>
<feature type="domain" description="TIR" evidence="5">
    <location>
        <begin position="754"/>
        <end position="897"/>
    </location>
</feature>
<feature type="modified residue" description="Phosphotyrosine" evidence="2">
    <location>
        <position position="759"/>
    </location>
</feature>
<feature type="modified residue" description="Phosphotyrosine" evidence="2">
    <location>
        <position position="858"/>
    </location>
</feature>
<feature type="glycosylation site" description="N-linked (GlcNAc...) asparagine" evidence="4">
    <location>
        <position position="53"/>
    </location>
</feature>
<feature type="glycosylation site" description="N-linked (GlcNAc...) asparagine" evidence="4">
    <location>
        <position position="58"/>
    </location>
</feature>
<feature type="glycosylation site" description="N-linked (GlcNAc...) asparagine" evidence="4">
    <location>
        <position position="71"/>
    </location>
</feature>
<feature type="glycosylation site" description="N-linked (GlcNAc...) asparagine" evidence="4">
    <location>
        <position position="125"/>
    </location>
</feature>
<feature type="glycosylation site" description="N-linked (GlcNAc...) asparagine" evidence="4">
    <location>
        <position position="197"/>
    </location>
</feature>
<feature type="glycosylation site" description="N-linked (GlcNAc...) asparagine" evidence="4">
    <location>
        <position position="248"/>
    </location>
</feature>
<feature type="glycosylation site" description="N-linked (GlcNAc...) asparagine" evidence="4">
    <location>
        <position position="253"/>
    </location>
</feature>
<feature type="glycosylation site" description="N-linked (GlcNAc...) asparagine" evidence="4">
    <location>
        <position position="276"/>
    </location>
</feature>
<feature type="glycosylation site" description="N-linked (GlcNAc...) asparagine" evidence="4">
    <location>
        <position position="292"/>
    </location>
</feature>
<feature type="glycosylation site" description="N-linked (GlcNAc...) asparagine" evidence="4">
    <location>
        <position position="399"/>
    </location>
</feature>
<feature type="glycosylation site" description="N-linked (GlcNAc...) asparagine" evidence="4">
    <location>
        <position position="637"/>
    </location>
</feature>
<feature type="glycosylation site" description="N-linked (GlcNAc...) asparagine" evidence="4">
    <location>
        <position position="663"/>
    </location>
</feature>
<feature type="glycosylation site" description="N-linked (GlcNAc...) asparagine" evidence="4">
    <location>
        <position position="668"/>
    </location>
</feature>
<feature type="disulfide bond" evidence="1">
    <location>
        <begin position="29"/>
        <end position="38"/>
    </location>
</feature>
<feature type="disulfide bond" evidence="1">
    <location>
        <begin position="96"/>
        <end position="123"/>
    </location>
</feature>
<feature type="disulfide bond" evidence="1">
    <location>
        <begin position="650"/>
        <end position="678"/>
    </location>
</feature>
<feature type="disulfide bond" evidence="1">
    <location>
        <begin position="652"/>
        <end position="697"/>
    </location>
</feature>
<feature type="cross-link" description="Glycyl lysine isopeptide (Lys-Gly) (interchain with G-Cter in ubiquitin)" evidence="3">
    <location>
        <position position="765"/>
    </location>
</feature>
<feature type="cross-link" description="Glycyl lysine isopeptide (Lys-Gly) (interchain with G-Cter in ubiquitin)" evidence="2">
    <location>
        <position position="812"/>
    </location>
</feature>
<feature type="cross-link" description="Glycyl lysine isopeptide (Lys-Gly) (interchain with G-Cter in ubiquitin)" evidence="2">
    <location>
        <position position="831"/>
    </location>
</feature>
<name>TLR3_BOVIN</name>
<organism>
    <name type="scientific">Bos taurus</name>
    <name type="common">Bovine</name>
    <dbReference type="NCBI Taxonomy" id="9913"/>
    <lineage>
        <taxon>Eukaryota</taxon>
        <taxon>Metazoa</taxon>
        <taxon>Chordata</taxon>
        <taxon>Craniata</taxon>
        <taxon>Vertebrata</taxon>
        <taxon>Euteleostomi</taxon>
        <taxon>Mammalia</taxon>
        <taxon>Eutheria</taxon>
        <taxon>Laurasiatheria</taxon>
        <taxon>Artiodactyla</taxon>
        <taxon>Ruminantia</taxon>
        <taxon>Pecora</taxon>
        <taxon>Bovidae</taxon>
        <taxon>Bovinae</taxon>
        <taxon>Bos</taxon>
    </lineage>
</organism>
<reference key="1">
    <citation type="submission" date="2004-08" db="EMBL/GenBank/DDBJ databases">
        <title>Molecular characterization of the bovine TLR3-encoding gene reveals expression from alternative promoters.</title>
        <authorList>
            <person name="Yang W."/>
            <person name="Werling D."/>
            <person name="Goldammer T."/>
            <person name="Seyfert H.M."/>
        </authorList>
    </citation>
    <scope>NUCLEOTIDE SEQUENCE [MRNA]</scope>
    <source>
        <tissue>Mammary gland</tissue>
    </source>
</reference>
<keyword id="KW-1015">Disulfide bond</keyword>
<keyword id="KW-0256">Endoplasmic reticulum</keyword>
<keyword id="KW-0967">Endosome</keyword>
<keyword id="KW-0325">Glycoprotein</keyword>
<keyword id="KW-0391">Immunity</keyword>
<keyword id="KW-0395">Inflammatory response</keyword>
<keyword id="KW-0399">Innate immunity</keyword>
<keyword id="KW-1017">Isopeptide bond</keyword>
<keyword id="KW-0433">Leucine-rich repeat</keyword>
<keyword id="KW-0472">Membrane</keyword>
<keyword id="KW-0597">Phosphoprotein</keyword>
<keyword id="KW-0675">Receptor</keyword>
<keyword id="KW-1185">Reference proteome</keyword>
<keyword id="KW-0677">Repeat</keyword>
<keyword id="KW-0694">RNA-binding</keyword>
<keyword id="KW-0732">Signal</keyword>
<keyword id="KW-0812">Transmembrane</keyword>
<keyword id="KW-1133">Transmembrane helix</keyword>
<keyword id="KW-0832">Ubl conjugation</keyword>
<dbReference type="EMBL" id="AJ812026">
    <property type="protein sequence ID" value="CAH19226.1"/>
    <property type="molecule type" value="mRNA"/>
</dbReference>
<dbReference type="RefSeq" id="NP_001008664.1">
    <property type="nucleotide sequence ID" value="NM_001008664.1"/>
</dbReference>
<dbReference type="SMR" id="Q5TJ59"/>
<dbReference type="FunCoup" id="Q5TJ59">
    <property type="interactions" value="273"/>
</dbReference>
<dbReference type="STRING" id="9913.ENSBTAP00000066983"/>
<dbReference type="GlyCosmos" id="Q5TJ59">
    <property type="glycosylation" value="13 sites, No reported glycans"/>
</dbReference>
<dbReference type="GlyGen" id="Q5TJ59">
    <property type="glycosylation" value="13 sites"/>
</dbReference>
<dbReference type="PaxDb" id="9913-ENSBTAP00000011445"/>
<dbReference type="GeneID" id="281535"/>
<dbReference type="KEGG" id="bta:281535"/>
<dbReference type="CTD" id="7098"/>
<dbReference type="eggNOG" id="KOG4641">
    <property type="taxonomic scope" value="Eukaryota"/>
</dbReference>
<dbReference type="InParanoid" id="Q5TJ59"/>
<dbReference type="OrthoDB" id="676979at2759"/>
<dbReference type="Proteomes" id="UP000009136">
    <property type="component" value="Unplaced"/>
</dbReference>
<dbReference type="GO" id="GO:0005769">
    <property type="term" value="C:early endosome"/>
    <property type="evidence" value="ECO:0007669"/>
    <property type="project" value="UniProtKB-SubCell"/>
</dbReference>
<dbReference type="GO" id="GO:0005789">
    <property type="term" value="C:endoplasmic reticulum membrane"/>
    <property type="evidence" value="ECO:0007669"/>
    <property type="project" value="UniProtKB-SubCell"/>
</dbReference>
<dbReference type="GO" id="GO:0010008">
    <property type="term" value="C:endosome membrane"/>
    <property type="evidence" value="ECO:0007669"/>
    <property type="project" value="UniProtKB-SubCell"/>
</dbReference>
<dbReference type="GO" id="GO:0031012">
    <property type="term" value="C:extracellular matrix"/>
    <property type="evidence" value="ECO:0000318"/>
    <property type="project" value="GO_Central"/>
</dbReference>
<dbReference type="GO" id="GO:0005615">
    <property type="term" value="C:extracellular space"/>
    <property type="evidence" value="ECO:0000318"/>
    <property type="project" value="GO_Central"/>
</dbReference>
<dbReference type="GO" id="GO:0003725">
    <property type="term" value="F:double-stranded RNA binding"/>
    <property type="evidence" value="ECO:0000318"/>
    <property type="project" value="GO_Central"/>
</dbReference>
<dbReference type="GO" id="GO:0038023">
    <property type="term" value="F:signaling receptor activity"/>
    <property type="evidence" value="ECO:0000318"/>
    <property type="project" value="GO_Central"/>
</dbReference>
<dbReference type="GO" id="GO:0006954">
    <property type="term" value="P:inflammatory response"/>
    <property type="evidence" value="ECO:0007669"/>
    <property type="project" value="UniProtKB-KW"/>
</dbReference>
<dbReference type="GO" id="GO:0045087">
    <property type="term" value="P:innate immune response"/>
    <property type="evidence" value="ECO:0007669"/>
    <property type="project" value="UniProtKB-KW"/>
</dbReference>
<dbReference type="GO" id="GO:0043331">
    <property type="term" value="P:response to dsRNA"/>
    <property type="evidence" value="ECO:0000318"/>
    <property type="project" value="GO_Central"/>
</dbReference>
<dbReference type="GO" id="GO:0007165">
    <property type="term" value="P:signal transduction"/>
    <property type="evidence" value="ECO:0007669"/>
    <property type="project" value="InterPro"/>
</dbReference>
<dbReference type="FunFam" id="3.40.50.10140:FF:000008">
    <property type="entry name" value="Toll-like receptor 3"/>
    <property type="match status" value="1"/>
</dbReference>
<dbReference type="FunFam" id="3.80.10.10:FF:000137">
    <property type="entry name" value="Toll-like receptor 3"/>
    <property type="match status" value="1"/>
</dbReference>
<dbReference type="Gene3D" id="3.80.10.10">
    <property type="entry name" value="Ribonuclease Inhibitor"/>
    <property type="match status" value="1"/>
</dbReference>
<dbReference type="Gene3D" id="3.40.50.10140">
    <property type="entry name" value="Toll/interleukin-1 receptor homology (TIR) domain"/>
    <property type="match status" value="1"/>
</dbReference>
<dbReference type="InterPro" id="IPR000483">
    <property type="entry name" value="Cys-rich_flank_reg_C"/>
</dbReference>
<dbReference type="InterPro" id="IPR001611">
    <property type="entry name" value="Leu-rich_rpt"/>
</dbReference>
<dbReference type="InterPro" id="IPR003591">
    <property type="entry name" value="Leu-rich_rpt_typical-subtyp"/>
</dbReference>
<dbReference type="InterPro" id="IPR032675">
    <property type="entry name" value="LRR_dom_sf"/>
</dbReference>
<dbReference type="InterPro" id="IPR050333">
    <property type="entry name" value="SLRP"/>
</dbReference>
<dbReference type="InterPro" id="IPR000157">
    <property type="entry name" value="TIR_dom"/>
</dbReference>
<dbReference type="InterPro" id="IPR041015">
    <property type="entry name" value="TLR3_TMD"/>
</dbReference>
<dbReference type="InterPro" id="IPR035897">
    <property type="entry name" value="Toll_tir_struct_dom_sf"/>
</dbReference>
<dbReference type="PANTHER" id="PTHR45712">
    <property type="entry name" value="AGAP008170-PA"/>
    <property type="match status" value="1"/>
</dbReference>
<dbReference type="PANTHER" id="PTHR45712:SF22">
    <property type="entry name" value="INSULIN-LIKE GROWTH FACTOR-BINDING PROTEIN COMPLEX ACID LABILE SUBUNIT"/>
    <property type="match status" value="1"/>
</dbReference>
<dbReference type="Pfam" id="PF13516">
    <property type="entry name" value="LRR_6"/>
    <property type="match status" value="1"/>
</dbReference>
<dbReference type="Pfam" id="PF13855">
    <property type="entry name" value="LRR_8"/>
    <property type="match status" value="6"/>
</dbReference>
<dbReference type="Pfam" id="PF01582">
    <property type="entry name" value="TIR"/>
    <property type="match status" value="1"/>
</dbReference>
<dbReference type="Pfam" id="PF17968">
    <property type="entry name" value="Tlr3_TMD"/>
    <property type="match status" value="1"/>
</dbReference>
<dbReference type="PRINTS" id="PR00019">
    <property type="entry name" value="LEURICHRPT"/>
</dbReference>
<dbReference type="SMART" id="SM00365">
    <property type="entry name" value="LRR_SD22"/>
    <property type="match status" value="9"/>
</dbReference>
<dbReference type="SMART" id="SM00369">
    <property type="entry name" value="LRR_TYP"/>
    <property type="match status" value="16"/>
</dbReference>
<dbReference type="SMART" id="SM00082">
    <property type="entry name" value="LRRCT"/>
    <property type="match status" value="1"/>
</dbReference>
<dbReference type="SMART" id="SM00255">
    <property type="entry name" value="TIR"/>
    <property type="match status" value="1"/>
</dbReference>
<dbReference type="SUPFAM" id="SSF52058">
    <property type="entry name" value="L domain-like"/>
    <property type="match status" value="2"/>
</dbReference>
<dbReference type="SUPFAM" id="SSF52200">
    <property type="entry name" value="Toll/Interleukin receptor TIR domain"/>
    <property type="match status" value="1"/>
</dbReference>
<dbReference type="PROSITE" id="PS51450">
    <property type="entry name" value="LRR"/>
    <property type="match status" value="20"/>
</dbReference>
<dbReference type="PROSITE" id="PS50104">
    <property type="entry name" value="TIR"/>
    <property type="match status" value="1"/>
</dbReference>
<evidence type="ECO:0000250" key="1"/>
<evidence type="ECO:0000250" key="2">
    <source>
        <dbReference type="UniProtKB" id="O15455"/>
    </source>
</evidence>
<evidence type="ECO:0000250" key="3">
    <source>
        <dbReference type="UniProtKB" id="Q99MB1"/>
    </source>
</evidence>
<evidence type="ECO:0000255" key="4"/>
<evidence type="ECO:0000255" key="5">
    <source>
        <dbReference type="PROSITE-ProRule" id="PRU00204"/>
    </source>
</evidence>
<evidence type="ECO:0000305" key="6"/>
<protein>
    <recommendedName>
        <fullName>Toll-like receptor 3</fullName>
    </recommendedName>
    <cdAntigenName>CD283</cdAntigenName>
</protein>